<evidence type="ECO:0000255" key="1">
    <source>
        <dbReference type="HAMAP-Rule" id="MF_00580"/>
    </source>
</evidence>
<name>CH10_HISS1</name>
<reference key="1">
    <citation type="journal article" date="2007" name="J. Bacteriol.">
        <title>Complete genome sequence of Haemophilus somnus (Histophilus somni) strain 129Pt and comparison to Haemophilus ducreyi 35000HP and Haemophilus influenzae Rd.</title>
        <authorList>
            <person name="Challacombe J.F."/>
            <person name="Duncan A.J."/>
            <person name="Brettin T.S."/>
            <person name="Bruce D."/>
            <person name="Chertkov O."/>
            <person name="Detter J.C."/>
            <person name="Han C.S."/>
            <person name="Misra M."/>
            <person name="Richardson P."/>
            <person name="Tapia R."/>
            <person name="Thayer N."/>
            <person name="Xie G."/>
            <person name="Inzana T.J."/>
        </authorList>
    </citation>
    <scope>NUCLEOTIDE SEQUENCE [LARGE SCALE GENOMIC DNA]</scope>
    <source>
        <strain>129Pt</strain>
    </source>
</reference>
<sequence length="96" mass="10326">MNIRPLHDRVIIKREEVETRSAGGIVLTGSAATKSTRAKVLAVGKGRILENGTVQPLDVKIGDTVIFNDGYGVKAEKIDGEEVLIISENDILAIVE</sequence>
<protein>
    <recommendedName>
        <fullName evidence="1">Co-chaperonin GroES</fullName>
    </recommendedName>
    <alternativeName>
        <fullName evidence="1">10 kDa chaperonin</fullName>
    </alternativeName>
    <alternativeName>
        <fullName evidence="1">Chaperonin-10</fullName>
        <shortName evidence="1">Cpn10</shortName>
    </alternativeName>
</protein>
<feature type="chain" id="PRO_1000025269" description="Co-chaperonin GroES">
    <location>
        <begin position="1"/>
        <end position="96"/>
    </location>
</feature>
<organism>
    <name type="scientific">Histophilus somni (strain 129Pt)</name>
    <name type="common">Haemophilus somnus</name>
    <dbReference type="NCBI Taxonomy" id="205914"/>
    <lineage>
        <taxon>Bacteria</taxon>
        <taxon>Pseudomonadati</taxon>
        <taxon>Pseudomonadota</taxon>
        <taxon>Gammaproteobacteria</taxon>
        <taxon>Pasteurellales</taxon>
        <taxon>Pasteurellaceae</taxon>
        <taxon>Histophilus</taxon>
    </lineage>
</organism>
<proteinExistence type="inferred from homology"/>
<accession>Q0I285</accession>
<gene>
    <name evidence="1" type="primary">groES</name>
    <name evidence="1" type="synonym">groS</name>
    <name type="ordered locus">HS_0467</name>
</gene>
<keyword id="KW-0143">Chaperone</keyword>
<keyword id="KW-0963">Cytoplasm</keyword>
<comment type="function">
    <text evidence="1">Together with the chaperonin GroEL, plays an essential role in assisting protein folding. The GroEL-GroES system forms a nano-cage that allows encapsulation of the non-native substrate proteins and provides a physical environment optimized to promote and accelerate protein folding. GroES binds to the apical surface of the GroEL ring, thereby capping the opening of the GroEL channel.</text>
</comment>
<comment type="subunit">
    <text evidence="1">Heptamer of 7 subunits arranged in a ring. Interacts with the chaperonin GroEL.</text>
</comment>
<comment type="subcellular location">
    <subcellularLocation>
        <location evidence="1">Cytoplasm</location>
    </subcellularLocation>
</comment>
<comment type="similarity">
    <text evidence="1">Belongs to the GroES chaperonin family.</text>
</comment>
<dbReference type="EMBL" id="CP000436">
    <property type="protein sequence ID" value="ABI24744.1"/>
    <property type="molecule type" value="Genomic_DNA"/>
</dbReference>
<dbReference type="SMR" id="Q0I285"/>
<dbReference type="KEGG" id="hso:HS_0467"/>
<dbReference type="eggNOG" id="COG0234">
    <property type="taxonomic scope" value="Bacteria"/>
</dbReference>
<dbReference type="HOGENOM" id="CLU_132825_1_1_6"/>
<dbReference type="GO" id="GO:0005737">
    <property type="term" value="C:cytoplasm"/>
    <property type="evidence" value="ECO:0007669"/>
    <property type="project" value="UniProtKB-SubCell"/>
</dbReference>
<dbReference type="GO" id="GO:0005524">
    <property type="term" value="F:ATP binding"/>
    <property type="evidence" value="ECO:0007669"/>
    <property type="project" value="InterPro"/>
</dbReference>
<dbReference type="GO" id="GO:0046872">
    <property type="term" value="F:metal ion binding"/>
    <property type="evidence" value="ECO:0007669"/>
    <property type="project" value="TreeGrafter"/>
</dbReference>
<dbReference type="GO" id="GO:0044183">
    <property type="term" value="F:protein folding chaperone"/>
    <property type="evidence" value="ECO:0007669"/>
    <property type="project" value="InterPro"/>
</dbReference>
<dbReference type="GO" id="GO:0051087">
    <property type="term" value="F:protein-folding chaperone binding"/>
    <property type="evidence" value="ECO:0007669"/>
    <property type="project" value="TreeGrafter"/>
</dbReference>
<dbReference type="GO" id="GO:0051082">
    <property type="term" value="F:unfolded protein binding"/>
    <property type="evidence" value="ECO:0007669"/>
    <property type="project" value="TreeGrafter"/>
</dbReference>
<dbReference type="GO" id="GO:0051085">
    <property type="term" value="P:chaperone cofactor-dependent protein refolding"/>
    <property type="evidence" value="ECO:0007669"/>
    <property type="project" value="TreeGrafter"/>
</dbReference>
<dbReference type="CDD" id="cd00320">
    <property type="entry name" value="cpn10"/>
    <property type="match status" value="1"/>
</dbReference>
<dbReference type="FunFam" id="2.30.33.40:FF:000001">
    <property type="entry name" value="10 kDa chaperonin"/>
    <property type="match status" value="1"/>
</dbReference>
<dbReference type="Gene3D" id="2.30.33.40">
    <property type="entry name" value="GroES chaperonin"/>
    <property type="match status" value="1"/>
</dbReference>
<dbReference type="HAMAP" id="MF_00580">
    <property type="entry name" value="CH10"/>
    <property type="match status" value="1"/>
</dbReference>
<dbReference type="InterPro" id="IPR020818">
    <property type="entry name" value="Chaperonin_GroES"/>
</dbReference>
<dbReference type="InterPro" id="IPR037124">
    <property type="entry name" value="Chaperonin_GroES_sf"/>
</dbReference>
<dbReference type="InterPro" id="IPR018369">
    <property type="entry name" value="Chaprnonin_Cpn10_CS"/>
</dbReference>
<dbReference type="InterPro" id="IPR011032">
    <property type="entry name" value="GroES-like_sf"/>
</dbReference>
<dbReference type="NCBIfam" id="NF001526">
    <property type="entry name" value="PRK00364.1-1"/>
    <property type="match status" value="1"/>
</dbReference>
<dbReference type="NCBIfam" id="NF001531">
    <property type="entry name" value="PRK00364.2-2"/>
    <property type="match status" value="1"/>
</dbReference>
<dbReference type="PANTHER" id="PTHR10772">
    <property type="entry name" value="10 KDA HEAT SHOCK PROTEIN"/>
    <property type="match status" value="1"/>
</dbReference>
<dbReference type="PANTHER" id="PTHR10772:SF58">
    <property type="entry name" value="CO-CHAPERONIN GROES"/>
    <property type="match status" value="1"/>
</dbReference>
<dbReference type="Pfam" id="PF00166">
    <property type="entry name" value="Cpn10"/>
    <property type="match status" value="1"/>
</dbReference>
<dbReference type="PRINTS" id="PR00297">
    <property type="entry name" value="CHAPERONIN10"/>
</dbReference>
<dbReference type="SMART" id="SM00883">
    <property type="entry name" value="Cpn10"/>
    <property type="match status" value="1"/>
</dbReference>
<dbReference type="SUPFAM" id="SSF50129">
    <property type="entry name" value="GroES-like"/>
    <property type="match status" value="1"/>
</dbReference>
<dbReference type="PROSITE" id="PS00681">
    <property type="entry name" value="CHAPERONINS_CPN10"/>
    <property type="match status" value="1"/>
</dbReference>